<keyword id="KW-0225">Disease variant</keyword>
<keyword id="KW-0472">Membrane</keyword>
<keyword id="KW-0479">Metal-binding</keyword>
<keyword id="KW-0576">Peroxisome</keyword>
<keyword id="KW-0958">Peroxisome biogenesis disorder</keyword>
<keyword id="KW-0653">Protein transport</keyword>
<keyword id="KW-1267">Proteomics identification</keyword>
<keyword id="KW-1185">Reference proteome</keyword>
<keyword id="KW-0812">Transmembrane</keyword>
<keyword id="KW-1133">Transmembrane helix</keyword>
<keyword id="KW-0813">Transport</keyword>
<keyword id="KW-0833">Ubl conjugation pathway</keyword>
<keyword id="KW-0861">Zellweger syndrome</keyword>
<keyword id="KW-0862">Zinc</keyword>
<keyword id="KW-0863">Zinc-finger</keyword>
<name>PEX12_HUMAN</name>
<reference key="1">
    <citation type="journal article" date="1997" name="Nat. Genet.">
        <title>Isolation of the human PEX12 gene, mutated in group 3 of the peroxisome biogenesis disorders.</title>
        <authorList>
            <person name="Chang C.-C."/>
            <person name="Lee W.-H."/>
            <person name="Moser H."/>
            <person name="Valle D."/>
            <person name="Gould S.J."/>
        </authorList>
    </citation>
    <scope>NUCLEOTIDE SEQUENCE [GENOMIC DNA / MRNA]</scope>
    <scope>INVOLVEMENT IN PBD3A</scope>
    <source>
        <tissue>Fetal brain</tissue>
    </source>
</reference>
<reference key="2">
    <citation type="journal article" date="1998" name="Mol. Cell. Biol.">
        <title>PEX12, the pathogenic gene of group III Zellweger syndrome: cDNA cloning by functional complementation on a CHO cell mutant, patient analysis, and characterization of PEX12p.</title>
        <authorList>
            <person name="Okumoto K."/>
            <person name="Shimozawa N."/>
            <person name="Kawai A."/>
            <person name="Tamura S."/>
            <person name="Tsukamoto T."/>
            <person name="Osumi T."/>
            <person name="Moser H."/>
            <person name="Wanders R.J.A."/>
            <person name="Suzuki Y."/>
            <person name="Kondo N."/>
            <person name="Fujiki Y."/>
        </authorList>
    </citation>
    <scope>NUCLEOTIDE SEQUENCE [MRNA]</scope>
    <scope>FUNCTION</scope>
    <scope>SUBCELLULAR LOCATION</scope>
</reference>
<reference key="3">
    <citation type="journal article" date="2004" name="Nat. Genet.">
        <title>Complete sequencing and characterization of 21,243 full-length human cDNAs.</title>
        <authorList>
            <person name="Ota T."/>
            <person name="Suzuki Y."/>
            <person name="Nishikawa T."/>
            <person name="Otsuki T."/>
            <person name="Sugiyama T."/>
            <person name="Irie R."/>
            <person name="Wakamatsu A."/>
            <person name="Hayashi K."/>
            <person name="Sato H."/>
            <person name="Nagai K."/>
            <person name="Kimura K."/>
            <person name="Makita H."/>
            <person name="Sekine M."/>
            <person name="Obayashi M."/>
            <person name="Nishi T."/>
            <person name="Shibahara T."/>
            <person name="Tanaka T."/>
            <person name="Ishii S."/>
            <person name="Yamamoto J."/>
            <person name="Saito K."/>
            <person name="Kawai Y."/>
            <person name="Isono Y."/>
            <person name="Nakamura Y."/>
            <person name="Nagahari K."/>
            <person name="Murakami K."/>
            <person name="Yasuda T."/>
            <person name="Iwayanagi T."/>
            <person name="Wagatsuma M."/>
            <person name="Shiratori A."/>
            <person name="Sudo H."/>
            <person name="Hosoiri T."/>
            <person name="Kaku Y."/>
            <person name="Kodaira H."/>
            <person name="Kondo H."/>
            <person name="Sugawara M."/>
            <person name="Takahashi M."/>
            <person name="Kanda K."/>
            <person name="Yokoi T."/>
            <person name="Furuya T."/>
            <person name="Kikkawa E."/>
            <person name="Omura Y."/>
            <person name="Abe K."/>
            <person name="Kamihara K."/>
            <person name="Katsuta N."/>
            <person name="Sato K."/>
            <person name="Tanikawa M."/>
            <person name="Yamazaki M."/>
            <person name="Ninomiya K."/>
            <person name="Ishibashi T."/>
            <person name="Yamashita H."/>
            <person name="Murakawa K."/>
            <person name="Fujimori K."/>
            <person name="Tanai H."/>
            <person name="Kimata M."/>
            <person name="Watanabe M."/>
            <person name="Hiraoka S."/>
            <person name="Chiba Y."/>
            <person name="Ishida S."/>
            <person name="Ono Y."/>
            <person name="Takiguchi S."/>
            <person name="Watanabe S."/>
            <person name="Yosida M."/>
            <person name="Hotuta T."/>
            <person name="Kusano J."/>
            <person name="Kanehori K."/>
            <person name="Takahashi-Fujii A."/>
            <person name="Hara H."/>
            <person name="Tanase T.-O."/>
            <person name="Nomura Y."/>
            <person name="Togiya S."/>
            <person name="Komai F."/>
            <person name="Hara R."/>
            <person name="Takeuchi K."/>
            <person name="Arita M."/>
            <person name="Imose N."/>
            <person name="Musashino K."/>
            <person name="Yuuki H."/>
            <person name="Oshima A."/>
            <person name="Sasaki N."/>
            <person name="Aotsuka S."/>
            <person name="Yoshikawa Y."/>
            <person name="Matsunawa H."/>
            <person name="Ichihara T."/>
            <person name="Shiohata N."/>
            <person name="Sano S."/>
            <person name="Moriya S."/>
            <person name="Momiyama H."/>
            <person name="Satoh N."/>
            <person name="Takami S."/>
            <person name="Terashima Y."/>
            <person name="Suzuki O."/>
            <person name="Nakagawa S."/>
            <person name="Senoh A."/>
            <person name="Mizoguchi H."/>
            <person name="Goto Y."/>
            <person name="Shimizu F."/>
            <person name="Wakebe H."/>
            <person name="Hishigaki H."/>
            <person name="Watanabe T."/>
            <person name="Sugiyama A."/>
            <person name="Takemoto M."/>
            <person name="Kawakami B."/>
            <person name="Yamazaki M."/>
            <person name="Watanabe K."/>
            <person name="Kumagai A."/>
            <person name="Itakura S."/>
            <person name="Fukuzumi Y."/>
            <person name="Fujimori Y."/>
            <person name="Komiyama M."/>
            <person name="Tashiro H."/>
            <person name="Tanigami A."/>
            <person name="Fujiwara T."/>
            <person name="Ono T."/>
            <person name="Yamada K."/>
            <person name="Fujii Y."/>
            <person name="Ozaki K."/>
            <person name="Hirao M."/>
            <person name="Ohmori Y."/>
            <person name="Kawabata A."/>
            <person name="Hikiji T."/>
            <person name="Kobatake N."/>
            <person name="Inagaki H."/>
            <person name="Ikema Y."/>
            <person name="Okamoto S."/>
            <person name="Okitani R."/>
            <person name="Kawakami T."/>
            <person name="Noguchi S."/>
            <person name="Itoh T."/>
            <person name="Shigeta K."/>
            <person name="Senba T."/>
            <person name="Matsumura K."/>
            <person name="Nakajima Y."/>
            <person name="Mizuno T."/>
            <person name="Morinaga M."/>
            <person name="Sasaki M."/>
            <person name="Togashi T."/>
            <person name="Oyama M."/>
            <person name="Hata H."/>
            <person name="Watanabe M."/>
            <person name="Komatsu T."/>
            <person name="Mizushima-Sugano J."/>
            <person name="Satoh T."/>
            <person name="Shirai Y."/>
            <person name="Takahashi Y."/>
            <person name="Nakagawa K."/>
            <person name="Okumura K."/>
            <person name="Nagase T."/>
            <person name="Nomura N."/>
            <person name="Kikuchi H."/>
            <person name="Masuho Y."/>
            <person name="Yamashita R."/>
            <person name="Nakai K."/>
            <person name="Yada T."/>
            <person name="Nakamura Y."/>
            <person name="Ohara O."/>
            <person name="Isogai T."/>
            <person name="Sugano S."/>
        </authorList>
    </citation>
    <scope>NUCLEOTIDE SEQUENCE [LARGE SCALE MRNA]</scope>
</reference>
<reference key="4">
    <citation type="submission" date="2005-09" db="EMBL/GenBank/DDBJ databases">
        <authorList>
            <person name="Mural R.J."/>
            <person name="Istrail S."/>
            <person name="Sutton G.G."/>
            <person name="Florea L."/>
            <person name="Halpern A.L."/>
            <person name="Mobarry C.M."/>
            <person name="Lippert R."/>
            <person name="Walenz B."/>
            <person name="Shatkay H."/>
            <person name="Dew I."/>
            <person name="Miller J.R."/>
            <person name="Flanigan M.J."/>
            <person name="Edwards N.J."/>
            <person name="Bolanos R."/>
            <person name="Fasulo D."/>
            <person name="Halldorsson B.V."/>
            <person name="Hannenhalli S."/>
            <person name="Turner R."/>
            <person name="Yooseph S."/>
            <person name="Lu F."/>
            <person name="Nusskern D.R."/>
            <person name="Shue B.C."/>
            <person name="Zheng X.H."/>
            <person name="Zhong F."/>
            <person name="Delcher A.L."/>
            <person name="Huson D.H."/>
            <person name="Kravitz S.A."/>
            <person name="Mouchard L."/>
            <person name="Reinert K."/>
            <person name="Remington K.A."/>
            <person name="Clark A.G."/>
            <person name="Waterman M.S."/>
            <person name="Eichler E.E."/>
            <person name="Adams M.D."/>
            <person name="Hunkapiller M.W."/>
            <person name="Myers E.W."/>
            <person name="Venter J.C."/>
        </authorList>
    </citation>
    <scope>NUCLEOTIDE SEQUENCE [LARGE SCALE GENOMIC DNA]</scope>
</reference>
<reference key="5">
    <citation type="journal article" date="2004" name="Genome Res.">
        <title>The status, quality, and expansion of the NIH full-length cDNA project: the Mammalian Gene Collection (MGC).</title>
        <authorList>
            <consortium name="The MGC Project Team"/>
        </authorList>
    </citation>
    <scope>NUCLEOTIDE SEQUENCE [LARGE SCALE MRNA]</scope>
    <source>
        <tissue>Testis</tissue>
    </source>
</reference>
<reference key="6">
    <citation type="journal article" date="1997" name="Nat. Genet.">
        <title>PEX12 encodes an integral membrane protein of peroxisomes.</title>
        <authorList>
            <person name="Okumoto K."/>
            <person name="Fujiki Y."/>
        </authorList>
    </citation>
    <scope>FUNCTION</scope>
    <scope>SUBCELLULAR LOCATION</scope>
    <scope>TOPOLOGY</scope>
    <scope>VARIANT PBD3A 231-LYS--ASN-359 DEL</scope>
</reference>
<reference key="7">
    <citation type="journal article" date="1999" name="J. Cell Biol.">
        <title>Peroxisome synthesis in the absence of preexisting peroxisomes.</title>
        <authorList>
            <person name="South S.T."/>
            <person name="Gould S.J."/>
        </authorList>
    </citation>
    <scope>SUBCELLULAR LOCATION</scope>
</reference>
<reference key="8">
    <citation type="journal article" date="2000" name="J. Cell Biol.">
        <title>PEX19 binds multiple peroxisomal membrane proteins, is predominantly cytoplasmic, and is required for peroxisome membrane synthesis.</title>
        <authorList>
            <person name="Sacksteder K.A."/>
            <person name="Jones J.M."/>
            <person name="South S.T."/>
            <person name="Li X."/>
            <person name="Liu Y."/>
            <person name="Gould S.J."/>
        </authorList>
    </citation>
    <scope>INTERACTION WITH PEX19</scope>
</reference>
<reference key="9">
    <citation type="journal article" date="2001" name="Mol. Cell. Biol.">
        <title>Human pex19p binds peroxisomal integral membrane proteins at regions distinct from their sorting sequences.</title>
        <authorList>
            <person name="Fransen M."/>
            <person name="Wylin T."/>
            <person name="Brees C."/>
            <person name="Mannaerts G.P."/>
            <person name="Van Veldhoven P.P."/>
        </authorList>
    </citation>
    <scope>INTERACTION WITH PEX19</scope>
    <scope>MUTAGENESIS OF CYS-304 AND CYS-307</scope>
</reference>
<reference key="10">
    <citation type="journal article" date="2014" name="J. Biol. Chem.">
        <title>Distinct modes of ubiquitination of peroxisome-targeting signal type 1 (PTS1) receptor Pex5p regulate PTS1 protein import.</title>
        <authorList>
            <person name="Okumoto K."/>
            <person name="Noda H."/>
            <person name="Fujiki Y."/>
        </authorList>
    </citation>
    <scope>FUNCTION</scope>
    <scope>PATHWAY</scope>
    <scope>IDENTIFICATION IN THE PEX2-PEX10-PEX12 RETROTRANSLOCATION CHANNEL</scope>
    <scope>MUTAGENESIS OF CYS-304</scope>
</reference>
<reference key="11">
    <citation type="journal article" date="2015" name="Mol. Biol. Rep.">
        <title>A novel mutation in the PEX12 gene causing a peroxisomal biogenesis disorder.</title>
        <authorList>
            <person name="Konkolova J."/>
            <person name="Petrovic R."/>
            <person name="Chandoga J."/>
            <person name="Halasova E."/>
            <person name="Jungova P."/>
            <person name="Boehmer D."/>
        </authorList>
    </citation>
    <scope>INVOLVEMENT IN PBD3B</scope>
</reference>
<reference key="12">
    <citation type="journal article" date="1999" name="J. Cell Biol.">
        <title>PEX12 interacts with PEX5 and PEX10 and acts downstream of receptor docking in peroxisomal matrix protein import.</title>
        <authorList>
            <person name="Chang C.C."/>
            <person name="Warren D.S."/>
            <person name="Sacksteder K.A."/>
            <person name="Gould S.J."/>
        </authorList>
    </citation>
    <scope>VARIANT PBD3B PHE-320</scope>
    <scope>CHARACTERIZATION OF VARIANT PBD3B PHE-320</scope>
    <scope>INTERACTION WITH PEX5 AND PEX10</scope>
</reference>
<reference key="13">
    <citation type="journal article" date="2006" name="Hum. Mutat.">
        <title>Identification of novel mutations in PEX2, PEX6, PEX10, PEX12, and PEX13 in Zellweger spectrum patients.</title>
        <authorList>
            <person name="Krause C."/>
            <person name="Rosewich H."/>
            <person name="Thanos M."/>
            <person name="Gaertner J."/>
        </authorList>
    </citation>
    <scope>VARIANT PBD3A 292-SER--ASN-359 DEL</scope>
</reference>
<reference key="14">
    <citation type="journal article" date="2007" name="J. Hum. Genet.">
        <title>A novel PEX12 mutation identified as the cause of a peroxisomal biogenesis disorder with mild clinical phenotype, mild biochemical abnormalities in fibroblasts and a mosaic catalase immunofluorescence pattern, even at 40 degrees C.</title>
        <authorList>
            <person name="Zeharia A."/>
            <person name="Ebberink M.S."/>
            <person name="Wanders R.J.A."/>
            <person name="Waterham H.R."/>
            <person name="Gutman A."/>
            <person name="Nissenkorn A."/>
            <person name="Korman S.H."/>
        </authorList>
    </citation>
    <scope>VARIANT PBD-CG3 SER-34</scope>
</reference>
<reference key="15">
    <citation type="journal article" date="2009" name="Hum. Mutat.">
        <title>Identification of novel mutations and sequence variation in the Zellweger syndrome spectrum of peroxisome biogenesis disorders.</title>
        <authorList>
            <person name="Yik W.Y."/>
            <person name="Steinberg S.J."/>
            <person name="Moser A.B."/>
            <person name="Moser H.W."/>
            <person name="Hacia J.G."/>
        </authorList>
    </citation>
    <scope>VARIANTS PBD-CG3 SER-34; GLN-178 DEL AND GLN-349 DEL</scope>
    <scope>VARIANT PBD3B PHE-320</scope>
    <scope>VARIANT ILE-245</scope>
</reference>
<reference key="16">
    <citation type="journal article" date="2016" name="Neuropediatrics">
        <title>Effect of l-Arginine in One Patient with Peroxisome Biogenesis Disorder due to PEX12 Deficiency.</title>
        <authorList>
            <person name="Sorlin A."/>
            <person name="Briand G."/>
            <person name="Cheillan D."/>
            <person name="Wiedemann A."/>
            <person name="Montaut-Verient B."/>
            <person name="Schmitt E."/>
            <person name="Feillet F."/>
        </authorList>
    </citation>
    <scope>VARIANT PBD3B PHE-320</scope>
</reference>
<reference key="17">
    <citation type="journal article" date="2021" name="Neurol. Sci.">
        <title>A founder mutation in PEX12 among Egyptian patients in peroxisomal biogenesis disorder.</title>
        <authorList>
            <person name="Zaki M.S."/>
            <person name="Issa M.Y."/>
            <person name="Thomas M.M."/>
            <person name="Elbendary H.M."/>
            <person name="Rafat K."/>
            <person name="Al Menabawy N.M."/>
            <person name="Selim L.A."/>
            <person name="Ismail S."/>
            <person name="Abdel-Salam G.M."/>
            <person name="Gleeson J.G."/>
        </authorList>
    </citation>
    <scope>VARIANT PBD3B GLN-349 DEL</scope>
</reference>
<feature type="chain" id="PRO_0000218610" description="Peroxisome assembly protein 12">
    <location>
        <begin position="1"/>
        <end position="359"/>
    </location>
</feature>
<feature type="topological domain" description="Peroxisomal matrix" evidence="1">
    <location>
        <begin position="1"/>
        <end position="19"/>
    </location>
</feature>
<feature type="transmembrane region" description="Helical; Name=TM1" evidence="1">
    <location>
        <begin position="20"/>
        <end position="47"/>
    </location>
</feature>
<feature type="topological domain" description="Cytoplasmic" evidence="1">
    <location>
        <begin position="48"/>
        <end position="51"/>
    </location>
</feature>
<feature type="transmembrane region" description="Helical; Name=TM2" evidence="1">
    <location>
        <begin position="52"/>
        <end position="76"/>
    </location>
</feature>
<feature type="topological domain" description="Peroxisomal matrix" evidence="1">
    <location>
        <begin position="77"/>
        <end position="109"/>
    </location>
</feature>
<feature type="transmembrane region" description="Helical; Name=TM3" evidence="1">
    <location>
        <begin position="110"/>
        <end position="139"/>
    </location>
</feature>
<feature type="topological domain" description="Cytoplasmic" evidence="1">
    <location>
        <begin position="140"/>
        <end position="144"/>
    </location>
</feature>
<feature type="transmembrane region" description="Helical; Name=TM4" evidence="1">
    <location>
        <begin position="145"/>
        <end position="183"/>
    </location>
</feature>
<feature type="topological domain" description="Peroxisomal matrix" evidence="1">
    <location>
        <begin position="184"/>
        <end position="249"/>
    </location>
</feature>
<feature type="transmembrane region" description="Helical; Name=TM5" evidence="1">
    <location>
        <begin position="250"/>
        <end position="277"/>
    </location>
</feature>
<feature type="topological domain" description="Cytoplasmic" evidence="20">
    <location>
        <begin position="278"/>
        <end position="359"/>
    </location>
</feature>
<feature type="zinc finger region" description="RING-type; degenerate">
    <location>
        <begin position="304"/>
        <end position="343"/>
    </location>
</feature>
<feature type="binding site" evidence="1">
    <location>
        <position position="304"/>
    </location>
    <ligand>
        <name>Zn(2+)</name>
        <dbReference type="ChEBI" id="CHEBI:29105"/>
    </ligand>
</feature>
<feature type="binding site" evidence="1">
    <location>
        <position position="307"/>
    </location>
    <ligand>
        <name>Zn(2+)</name>
        <dbReference type="ChEBI" id="CHEBI:29105"/>
    </ligand>
</feature>
<feature type="binding site" evidence="1">
    <location>
        <position position="325"/>
    </location>
    <ligand>
        <name>Zn(2+)</name>
        <dbReference type="ChEBI" id="CHEBI:29105"/>
    </ligand>
</feature>
<feature type="binding site" evidence="1">
    <location>
        <position position="328"/>
    </location>
    <ligand>
        <name>Zn(2+)</name>
        <dbReference type="ChEBI" id="CHEBI:29105"/>
    </ligand>
</feature>
<feature type="sequence variant" id="VAR_058389" description="In PBD-CG3; benign; dbSNP:rs147530802." evidence="8 9">
    <original>R</original>
    <variation>S</variation>
    <location>
        <position position="34"/>
    </location>
</feature>
<feature type="sequence variant" id="VAR_058390" description="In PBD-CG3." evidence="9">
    <location>
        <position position="178"/>
    </location>
</feature>
<feature type="sequence variant" id="VAR_087150" description="In PBD3A." evidence="15">
    <location>
        <begin position="231"/>
        <end position="359"/>
    </location>
</feature>
<feature type="sequence variant" id="VAR_050495" description="In dbSNP:rs12941376." evidence="9">
    <original>L</original>
    <variation>I</variation>
    <location>
        <position position="245"/>
    </location>
</feature>
<feature type="sequence variant" id="VAR_087151" description="In PBD3A." evidence="7">
    <location>
        <begin position="292"/>
        <end position="359"/>
    </location>
</feature>
<feature type="sequence variant" id="VAR_031998" description="In PBD3B; attenuates interaction with PEX10 and decreases peroxisomal protein import; dbSNP:rs28936697." evidence="4 9 12">
    <original>S</original>
    <variation>F</variation>
    <location>
        <position position="320"/>
    </location>
</feature>
<feature type="sequence variant" id="VAR_058391" description="In PBD-CG3 and PBD3B." evidence="9 13">
    <location>
        <position position="349"/>
    </location>
</feature>
<feature type="mutagenesis site" description="Abolishes ability to activate the E3 ubiquitin-protein ligase activity of PEX10. Abolishes interaction with PEX19; when associated with Q-307." evidence="6 10">
    <original>C</original>
    <variation>W</variation>
    <location>
        <position position="304"/>
    </location>
</feature>
<feature type="mutagenesis site" description="Abolishes interaction with PEX19; when associated with W-304." evidence="6">
    <original>C</original>
    <variation>Q</variation>
    <location>
        <position position="307"/>
    </location>
</feature>
<comment type="function">
    <text evidence="2 10 15 16">Component of a retrotranslocation channel required for peroxisome organization by mediating export of the PEX5 receptor from peroxisomes to the cytosol, thereby promoting PEX5 recycling (PubMed:24662292, PubMed:9354782, PubMed:9632816). The retrotranslocation channel is composed of PEX2, PEX10 and PEX12; each subunit contributing transmembrane segments that coassemble into an open channel that specifically allows the passage of PEX5 through the peroxisomal membrane (By similarity). PEX12 also regulates PEX5 recycling by activating the E3 ubiquitin-protein ligase activity of PEX10 (PubMed:24662292). When PEX5 recycling is compromised, PEX12 stimulates PEX10-mediated polyubiquitination of PEX5, leading to its subsequent degradation (By similarity).</text>
</comment>
<comment type="pathway">
    <text evidence="10">Protein modification; protein ubiquitination.</text>
</comment>
<comment type="subunit">
    <text evidence="4 5 6 10">Component of the PEX2-PEX10-PEX12 retrotranslocation channel, composed of PEX2, PEX10 and PEX12 (PubMed:10562279, PubMed:24662292). Interacts with PEX19 via its cytoplasmic domain (PubMed:10704444, PubMed:11390669).</text>
</comment>
<comment type="interaction">
    <interactant intactId="EBI-594836">
        <id>O00623</id>
    </interactant>
    <interactant intactId="EBI-2876927">
        <id>Q9ULC5</id>
        <label>ACSL5</label>
    </interactant>
    <organismsDiffer>false</organismsDiffer>
    <experiments>3</experiments>
</comment>
<comment type="interaction">
    <interactant intactId="EBI-594836">
        <id>O00623</id>
    </interactant>
    <interactant intactId="EBI-10827839">
        <id>Q15848</id>
        <label>ADIPOQ</label>
    </interactant>
    <organismsDiffer>false</organismsDiffer>
    <experiments>3</experiments>
</comment>
<comment type="interaction">
    <interactant intactId="EBI-594836">
        <id>O00623</id>
    </interactant>
    <interactant intactId="EBI-752094">
        <id>Q12982</id>
        <label>BNIP2</label>
    </interactant>
    <organismsDiffer>false</organismsDiffer>
    <experiments>3</experiments>
</comment>
<comment type="interaction">
    <interactant intactId="EBI-594836">
        <id>O00623</id>
    </interactant>
    <interactant intactId="EBI-8648738">
        <id>Q8WVV5</id>
        <label>BTN2A2</label>
    </interactant>
    <organismsDiffer>false</organismsDiffer>
    <experiments>3</experiments>
</comment>
<comment type="interaction">
    <interactant intactId="EBI-594836">
        <id>O00623</id>
    </interactant>
    <interactant intactId="EBI-11986083">
        <id>Q6UWT4</id>
        <label>C5orf46</label>
    </interactant>
    <organismsDiffer>false</organismsDiffer>
    <experiments>3</experiments>
</comment>
<comment type="interaction">
    <interactant intactId="EBI-594836">
        <id>O00623</id>
    </interactant>
    <interactant intactId="EBI-13372810">
        <id>P78369</id>
        <label>CLDN10</label>
    </interactant>
    <organismsDiffer>false</organismsDiffer>
    <experiments>3</experiments>
</comment>
<comment type="interaction">
    <interactant intactId="EBI-594836">
        <id>O00623</id>
    </interactant>
    <interactant intactId="EBI-10241815">
        <id>Q4VAQ0</id>
        <label>COL8A2</label>
    </interactant>
    <organismsDiffer>false</organismsDiffer>
    <experiments>3</experiments>
</comment>
<comment type="interaction">
    <interactant intactId="EBI-594836">
        <id>O00623</id>
    </interactant>
    <interactant intactId="EBI-2680384">
        <id>Q9BQA9</id>
        <label>CYBC1</label>
    </interactant>
    <organismsDiffer>false</organismsDiffer>
    <experiments>3</experiments>
</comment>
<comment type="interaction">
    <interactant intactId="EBI-594836">
        <id>O00623</id>
    </interactant>
    <interactant intactId="EBI-8639143">
        <id>Q96LL9</id>
        <label>DNAJC30</label>
    </interactant>
    <organismsDiffer>false</organismsDiffer>
    <experiments>3</experiments>
</comment>
<comment type="interaction">
    <interactant intactId="EBI-594836">
        <id>O00623</id>
    </interactant>
    <interactant intactId="EBI-10976398">
        <id>Q7Z2K6</id>
        <label>ERMP1</label>
    </interactant>
    <organismsDiffer>false</organismsDiffer>
    <experiments>3</experiments>
</comment>
<comment type="interaction">
    <interactant intactId="EBI-594836">
        <id>O00623</id>
    </interactant>
    <interactant intactId="EBI-11337888">
        <id>Q7L5A8</id>
        <label>FA2H</label>
    </interactant>
    <organismsDiffer>false</organismsDiffer>
    <experiments>3</experiments>
</comment>
<comment type="interaction">
    <interactant intactId="EBI-594836">
        <id>O00623</id>
    </interactant>
    <interactant intactId="EBI-724839">
        <id>Q14318</id>
        <label>FKBP8</label>
    </interactant>
    <organismsDiffer>false</organismsDiffer>
    <experiments>3</experiments>
</comment>
<comment type="interaction">
    <interactant intactId="EBI-594836">
        <id>O00623</id>
    </interactant>
    <interactant intactId="EBI-713304">
        <id>Q9H0Q3</id>
        <label>FXYD6</label>
    </interactant>
    <organismsDiffer>false</organismsDiffer>
    <experiments>3</experiments>
</comment>
<comment type="interaction">
    <interactant intactId="EBI-594836">
        <id>O00623</id>
    </interactant>
    <interactant intactId="EBI-3905204">
        <id>P29033</id>
        <label>GJB2</label>
    </interactant>
    <organismsDiffer>false</organismsDiffer>
    <experiments>3</experiments>
</comment>
<comment type="interaction">
    <interactant intactId="EBI-594836">
        <id>O00623</id>
    </interactant>
    <interactant intactId="EBI-725665">
        <id>Q9Y5U9</id>
        <label>IER3IP1</label>
    </interactant>
    <organismsDiffer>false</organismsDiffer>
    <experiments>3</experiments>
</comment>
<comment type="interaction">
    <interactant intactId="EBI-594836">
        <id>O00623</id>
    </interactant>
    <interactant intactId="EBI-10317612">
        <id>Q9P0N8</id>
        <label>MARCHF2</label>
    </interactant>
    <organismsDiffer>false</organismsDiffer>
    <experiments>3</experiments>
</comment>
<comment type="interaction">
    <interactant intactId="EBI-594836">
        <id>O00623</id>
    </interactant>
    <interactant intactId="EBI-12866138">
        <id>A0A0C4DFN3</id>
        <label>MGLL</label>
    </interactant>
    <organismsDiffer>false</organismsDiffer>
    <experiments>3</experiments>
</comment>
<comment type="interaction">
    <interactant intactId="EBI-594836">
        <id>O00623</id>
    </interactant>
    <interactant intactId="EBI-3919611">
        <id>Q16617</id>
        <label>NKG7</label>
    </interactant>
    <organismsDiffer>false</organismsDiffer>
    <experiments>3</experiments>
</comment>
<comment type="interaction">
    <interactant intactId="EBI-594836">
        <id>O00623</id>
    </interactant>
    <interactant intactId="EBI-10262547">
        <id>Q8IXM6</id>
        <label>NRM</label>
    </interactant>
    <organismsDiffer>false</organismsDiffer>
    <experiments>3</experiments>
</comment>
<comment type="interaction">
    <interactant intactId="EBI-594836">
        <id>O00623</id>
    </interactant>
    <interactant intactId="EBI-594747">
        <id>P40855</id>
        <label>PEX19</label>
    </interactant>
    <organismsDiffer>false</organismsDiffer>
    <experiments>2</experiments>
</comment>
<comment type="interaction">
    <interactant intactId="EBI-594836">
        <id>O00623</id>
    </interactant>
    <interactant intactId="EBI-597835">
        <id>P50542</id>
        <label>PEX5</label>
    </interactant>
    <organismsDiffer>false</organismsDiffer>
    <experiments>4</experiments>
</comment>
<comment type="interaction">
    <interactant intactId="EBI-594836">
        <id>O00623</id>
    </interactant>
    <interactant intactId="EBI-8652812">
        <id>P54315</id>
        <label>PNLIPRP1</label>
    </interactant>
    <organismsDiffer>false</organismsDiffer>
    <experiments>3</experiments>
</comment>
<comment type="interaction">
    <interactant intactId="EBI-594836">
        <id>O00623</id>
    </interactant>
    <interactant intactId="EBI-742898">
        <id>P43378</id>
        <label>PTPN9</label>
    </interactant>
    <organismsDiffer>false</organismsDiffer>
    <experiments>3</experiments>
</comment>
<comment type="interaction">
    <interactant intactId="EBI-594836">
        <id>O00623</id>
    </interactant>
    <interactant intactId="EBI-3232108">
        <id>Q8N0V3</id>
        <label>RBFA</label>
    </interactant>
    <organismsDiffer>false</organismsDiffer>
    <experiments>3</experiments>
</comment>
<comment type="interaction">
    <interactant intactId="EBI-594836">
        <id>O00623</id>
    </interactant>
    <interactant intactId="EBI-8652744">
        <id>Q96IW7</id>
        <label>SEC22A</label>
    </interactant>
    <organismsDiffer>false</organismsDiffer>
    <experiments>3</experiments>
</comment>
<comment type="interaction">
    <interactant intactId="EBI-594836">
        <id>O00623</id>
    </interactant>
    <interactant intactId="EBI-4402709">
        <id>P60059</id>
        <label>SEC61G</label>
    </interactant>
    <organismsDiffer>false</organismsDiffer>
    <experiments>3</experiments>
</comment>
<comment type="interaction">
    <interactant intactId="EBI-594836">
        <id>O00623</id>
    </interactant>
    <interactant intactId="EBI-8640191">
        <id>Q9NRQ5</id>
        <label>SMCO4</label>
    </interactant>
    <organismsDiffer>false</organismsDiffer>
    <experiments>3</experiments>
</comment>
<comment type="interaction">
    <interactant intactId="EBI-594836">
        <id>O00623</id>
    </interactant>
    <interactant intactId="EBI-744915">
        <id>P10124</id>
        <label>SRGN</label>
    </interactant>
    <organismsDiffer>false</organismsDiffer>
    <experiments>3</experiments>
</comment>
<comment type="interaction">
    <interactant intactId="EBI-594836">
        <id>O00623</id>
    </interactant>
    <interactant intactId="EBI-727240">
        <id>Q9UNK0</id>
        <label>STX8</label>
    </interactant>
    <organismsDiffer>false</organismsDiffer>
    <experiments>3</experiments>
</comment>
<comment type="interaction">
    <interactant intactId="EBI-594836">
        <id>O00623</id>
    </interactant>
    <interactant intactId="EBI-311394">
        <id>Q9C0I4</id>
        <label>THSD7B</label>
    </interactant>
    <organismsDiffer>false</organismsDiffer>
    <experiments>3</experiments>
</comment>
<comment type="interaction">
    <interactant intactId="EBI-594836">
        <id>O00623</id>
    </interactant>
    <interactant intactId="EBI-723946">
        <id>P17152</id>
        <label>TMEM11</label>
    </interactant>
    <organismsDiffer>false</organismsDiffer>
    <experiments>3</experiments>
</comment>
<comment type="interaction">
    <interactant intactId="EBI-594836">
        <id>O00623</id>
    </interactant>
    <interactant intactId="EBI-347385">
        <id>Q9H0R3</id>
        <label>TMEM222</label>
    </interactant>
    <organismsDiffer>false</organismsDiffer>
    <experiments>3</experiments>
</comment>
<comment type="interaction">
    <interactant intactId="EBI-594836">
        <id>O00623</id>
    </interactant>
    <interactant intactId="EBI-16746122">
        <id>Q9NSU2-1</id>
        <label>TREX1</label>
    </interactant>
    <organismsDiffer>false</organismsDiffer>
    <experiments>3</experiments>
</comment>
<comment type="interaction">
    <interactant intactId="EBI-594836">
        <id>O00623</id>
    </interactant>
    <interactant intactId="EBI-10210710">
        <id>P49638</id>
        <label>TTPA</label>
    </interactant>
    <organismsDiffer>false</organismsDiffer>
    <experiments>3</experiments>
</comment>
<comment type="subcellular location">
    <subcellularLocation>
        <location evidence="17">Peroxisome membrane</location>
        <topology evidence="3">Multi-pass membrane protein</topology>
    </subcellularLocation>
</comment>
<comment type="domain">
    <text evidence="1">The three subunits of the retrotranslocation channel (PEX2, PEX10 and PEX12) coassemble in the membrane into a channel with an open 10 Angstrom pore (By similarity). The RING-type zinc-fingers that catalyze PEX5 receptor ubiquitination are positioned above the pore on the cytosolic side of the complex (By similarity).</text>
</comment>
<comment type="domain">
    <text evidence="2">The RING-type zinc-finger is degenerated and only coordinates one zinc ions, preventing E3 ubiquitin-protein ligase activity.</text>
</comment>
<comment type="disease" evidence="8 9">
    <disease id="DI-00914">
        <name>Peroxisome biogenesis disorder complementation group 3</name>
        <acronym>PBD-CG3</acronym>
        <description>A peroxisomal disorder arising from a failure of protein import into the peroxisomal membrane or matrix. The peroxisome biogenesis disorders (PBD group) are genetically heterogeneous with at least 14 distinct genetic groups as concluded from complementation studies. Include disorders are: Zellweger syndrome (ZWS), neonatal adrenoleukodystrophy (NALD), infantile Refsum disease (IRD), and classical rhizomelic chondrodysplasia punctata (RCDP). ZWS, NALD and IRD are distinct from RCDP and constitute a clinical continuum of overlapping phenotypes known as the Zellweger spectrum (PBD-ZSS).</description>
        <dbReference type="MIM" id="614859"/>
    </disease>
    <text>The disease is caused by variants affecting the gene represented in this entry.</text>
</comment>
<comment type="disease" evidence="7 14 15">
    <disease id="DI-03580">
        <name>Peroxisome biogenesis disorder 3A</name>
        <acronym>PBD3A</acronym>
        <description>A fatal peroxisome biogenesis disorder belonging to the Zellweger disease spectrum and clinically characterized by severe neurologic dysfunction with profound psychomotor retardation, severe hypotonia and neonatal seizures, craniofacial abnormalities, liver dysfunction, and biochemically by the absence of peroxisomes. Additional features include cardiovascular and skeletal defects, renal cysts, ocular abnormalities, and hearing impairment. Most severely affected individuals with the classic form of the disease (classic Zellweger syndrome) die within the first year of life.</description>
        <dbReference type="MIM" id="614859"/>
    </disease>
    <text>The disease is caused by variants affecting the gene represented in this entry.</text>
</comment>
<comment type="disease" evidence="4 9 11 12 13">
    <disease id="DI-00598">
        <name>Peroxisome biogenesis disorder 3B</name>
        <acronym>PBD3B</acronym>
        <description>A peroxisome biogenesis disorder that includes neonatal adrenoleukodystrophy (NALD) and infantile Refsum disease (IRD), two milder manifestations of the Zellweger disease spectrum. The clinical course of patients with the NALD and IRD presentation is variable and may include developmental delay, hypotonia, liver dysfunction, sensorineural hearing loss, retinal dystrophy and vision impairment. Children with the NALD presentation may reach their teens, while patients with the IRD presentation may reach adulthood. The clinical conditions are often slowly progressive in particular with respect to loss of hearing and vision. The biochemical abnormalities include accumulation of phytanic acid, very long chain fatty acids (VLCFA), di- and trihydroxycholestanoic acid and pipecolic acid.</description>
        <dbReference type="MIM" id="266510"/>
    </disease>
    <text>The disease is caused by variants affecting the gene represented in this entry.</text>
</comment>
<comment type="similarity">
    <text evidence="19">Belongs to the pex2/pex10/pex12 family.</text>
</comment>
<comment type="online information" name="dbPEX, PEX Gene Database">
    <link uri="https://databases.lovd.nl/shared/genes/PEX12"/>
</comment>
<sequence>MAEHGAHFTAASVADDQPSIFEVVAQDSLMTAVRPALQHVVKVLAESNPTHYGFLWRWFDEIFTLLDLLLQQHYLSRTSASFSENFYGLKRIVMGDTHKSQRLASAGLPKQQLWKSIMFLVLLPYLKVKLEKLVSSLREEDEYSIHPPSSRWKRFYRAFLAAYPFVNMAWEGWFLVQQLRYILGKAQHHSPLLRLAGVQLGRLTVQDIQALEHKPAKASMMQQPARSVSEKINSALKKAVGGVALSLSTGLSVGVFFLQFLDWWYSSENQETIKSLTALPTPPPPVHLDYNSDSPLLPKMKTVCPLCRKTRVNDTVLATSGYVFCYRCVFHYVRSHQACPITGYPTEVQHLIKLYSPEN</sequence>
<organism>
    <name type="scientific">Homo sapiens</name>
    <name type="common">Human</name>
    <dbReference type="NCBI Taxonomy" id="9606"/>
    <lineage>
        <taxon>Eukaryota</taxon>
        <taxon>Metazoa</taxon>
        <taxon>Chordata</taxon>
        <taxon>Craniata</taxon>
        <taxon>Vertebrata</taxon>
        <taxon>Euteleostomi</taxon>
        <taxon>Mammalia</taxon>
        <taxon>Eutheria</taxon>
        <taxon>Euarchontoglires</taxon>
        <taxon>Primates</taxon>
        <taxon>Haplorrhini</taxon>
        <taxon>Catarrhini</taxon>
        <taxon>Hominidae</taxon>
        <taxon>Homo</taxon>
    </lineage>
</organism>
<dbReference type="EMBL" id="U91521">
    <property type="protein sequence ID" value="AAC68812.1"/>
    <property type="molecule type" value="mRNA"/>
</dbReference>
<dbReference type="EMBL" id="U91522">
    <property type="protein sequence ID" value="AAC68813.1"/>
    <property type="molecule type" value="Genomic_DNA"/>
</dbReference>
<dbReference type="EMBL" id="AB004546">
    <property type="protein sequence ID" value="BAA31559.1"/>
    <property type="molecule type" value="mRNA"/>
</dbReference>
<dbReference type="EMBL" id="AK312635">
    <property type="protein sequence ID" value="BAG35519.1"/>
    <property type="molecule type" value="mRNA"/>
</dbReference>
<dbReference type="EMBL" id="CH471147">
    <property type="protein sequence ID" value="EAW80143.1"/>
    <property type="molecule type" value="Genomic_DNA"/>
</dbReference>
<dbReference type="EMBL" id="BC031085">
    <property type="protein sequence ID" value="AAH31085.1"/>
    <property type="molecule type" value="mRNA"/>
</dbReference>
<dbReference type="CCDS" id="CCDS11296.1"/>
<dbReference type="RefSeq" id="NP_000277.1">
    <property type="nucleotide sequence ID" value="NM_000286.3"/>
</dbReference>
<dbReference type="SMR" id="O00623"/>
<dbReference type="BioGRID" id="111216">
    <property type="interactions" value="42"/>
</dbReference>
<dbReference type="ComplexPortal" id="CPX-2649">
    <property type="entry name" value="PEX2-PEX10-PEX12 E3 ubiquitin ligase complex"/>
</dbReference>
<dbReference type="CORUM" id="O00623"/>
<dbReference type="FunCoup" id="O00623">
    <property type="interactions" value="1604"/>
</dbReference>
<dbReference type="IntAct" id="O00623">
    <property type="interactions" value="36"/>
</dbReference>
<dbReference type="MINT" id="O00623"/>
<dbReference type="STRING" id="9606.ENSP00000482609"/>
<dbReference type="TCDB" id="3.A.20.1.1">
    <property type="family name" value="the peroxisomal protein importer (ppi) family"/>
</dbReference>
<dbReference type="GlyGen" id="O00623">
    <property type="glycosylation" value="1 site"/>
</dbReference>
<dbReference type="iPTMnet" id="O00623"/>
<dbReference type="PhosphoSitePlus" id="O00623"/>
<dbReference type="BioMuta" id="PEX12"/>
<dbReference type="jPOST" id="O00623"/>
<dbReference type="MassIVE" id="O00623"/>
<dbReference type="PaxDb" id="9606-ENSP00000482609"/>
<dbReference type="PeptideAtlas" id="O00623"/>
<dbReference type="ProteomicsDB" id="47996"/>
<dbReference type="Pumba" id="O00623"/>
<dbReference type="Antibodypedia" id="27495">
    <property type="antibodies" value="129 antibodies from 26 providers"/>
</dbReference>
<dbReference type="DNASU" id="5193"/>
<dbReference type="Ensembl" id="ENST00000225873.9">
    <property type="protein sequence ID" value="ENSP00000225873.3"/>
    <property type="gene ID" value="ENSG00000108733.11"/>
</dbReference>
<dbReference type="GeneID" id="5193"/>
<dbReference type="KEGG" id="hsa:5193"/>
<dbReference type="MANE-Select" id="ENST00000225873.9">
    <property type="protein sequence ID" value="ENSP00000225873.3"/>
    <property type="RefSeq nucleotide sequence ID" value="NM_000286.3"/>
    <property type="RefSeq protein sequence ID" value="NP_000277.1"/>
</dbReference>
<dbReference type="UCSC" id="uc002hjp.4">
    <property type="organism name" value="human"/>
</dbReference>
<dbReference type="AGR" id="HGNC:8854"/>
<dbReference type="CTD" id="5193"/>
<dbReference type="DisGeNET" id="5193"/>
<dbReference type="GeneCards" id="PEX12"/>
<dbReference type="GeneReviews" id="PEX12"/>
<dbReference type="HGNC" id="HGNC:8854">
    <property type="gene designation" value="PEX12"/>
</dbReference>
<dbReference type="HPA" id="ENSG00000108733">
    <property type="expression patterns" value="Low tissue specificity"/>
</dbReference>
<dbReference type="MalaCards" id="PEX12"/>
<dbReference type="MIM" id="266510">
    <property type="type" value="phenotype"/>
</dbReference>
<dbReference type="MIM" id="601758">
    <property type="type" value="gene"/>
</dbReference>
<dbReference type="MIM" id="614859">
    <property type="type" value="phenotype"/>
</dbReference>
<dbReference type="neXtProt" id="NX_O00623"/>
<dbReference type="OpenTargets" id="ENSG00000108733"/>
<dbReference type="Orphanet" id="772">
    <property type="disease" value="Infantile Refsum disease"/>
</dbReference>
<dbReference type="Orphanet" id="44">
    <property type="disease" value="Neonatal adrenoleukodystrophy"/>
</dbReference>
<dbReference type="Orphanet" id="912">
    <property type="disease" value="Zellweger syndrome"/>
</dbReference>
<dbReference type="PharmGKB" id="PA33196"/>
<dbReference type="VEuPathDB" id="HostDB:ENSG00000108733"/>
<dbReference type="eggNOG" id="KOG0826">
    <property type="taxonomic scope" value="Eukaryota"/>
</dbReference>
<dbReference type="GeneTree" id="ENSGT00390000016209"/>
<dbReference type="InParanoid" id="O00623"/>
<dbReference type="OMA" id="QHYLARC"/>
<dbReference type="OrthoDB" id="107372at2759"/>
<dbReference type="PAN-GO" id="O00623">
    <property type="GO annotations" value="5 GO annotations based on evolutionary models"/>
</dbReference>
<dbReference type="PhylomeDB" id="O00623"/>
<dbReference type="TreeFam" id="TF314511"/>
<dbReference type="PathwayCommons" id="O00623"/>
<dbReference type="Reactome" id="R-HSA-8866654">
    <property type="pathway name" value="E3 ubiquitin ligases ubiquitinate target proteins"/>
</dbReference>
<dbReference type="Reactome" id="R-HSA-9033241">
    <property type="pathway name" value="Peroxisomal protein import"/>
</dbReference>
<dbReference type="Reactome" id="R-HSA-9603798">
    <property type="pathway name" value="Class I peroxisomal membrane protein import"/>
</dbReference>
<dbReference type="SignaLink" id="O00623"/>
<dbReference type="SIGNOR" id="O00623"/>
<dbReference type="UniPathway" id="UPA00143"/>
<dbReference type="BioGRID-ORCS" id="5193">
    <property type="hits" value="42 hits in 1196 CRISPR screens"/>
</dbReference>
<dbReference type="ChiTaRS" id="PEX12">
    <property type="organism name" value="human"/>
</dbReference>
<dbReference type="GeneWiki" id="PEX12"/>
<dbReference type="GenomeRNAi" id="5193"/>
<dbReference type="Pharos" id="O00623">
    <property type="development level" value="Tbio"/>
</dbReference>
<dbReference type="PRO" id="PR:O00623"/>
<dbReference type="Proteomes" id="UP000005640">
    <property type="component" value="Chromosome 17"/>
</dbReference>
<dbReference type="RNAct" id="O00623">
    <property type="molecule type" value="protein"/>
</dbReference>
<dbReference type="Bgee" id="ENSG00000108733">
    <property type="expression patterns" value="Expressed in secondary oocyte and 185 other cell types or tissues"/>
</dbReference>
<dbReference type="ExpressionAtlas" id="O00623">
    <property type="expression patterns" value="baseline and differential"/>
</dbReference>
<dbReference type="GO" id="GO:0005829">
    <property type="term" value="C:cytosol"/>
    <property type="evidence" value="ECO:0000304"/>
    <property type="project" value="Reactome"/>
</dbReference>
<dbReference type="GO" id="GO:1990429">
    <property type="term" value="C:peroxisomal importomer complex"/>
    <property type="evidence" value="ECO:0000318"/>
    <property type="project" value="GO_Central"/>
</dbReference>
<dbReference type="GO" id="GO:0005778">
    <property type="term" value="C:peroxisomal membrane"/>
    <property type="evidence" value="ECO:0000314"/>
    <property type="project" value="UniProtKB"/>
</dbReference>
<dbReference type="GO" id="GO:0005777">
    <property type="term" value="C:peroxisome"/>
    <property type="evidence" value="ECO:0000314"/>
    <property type="project" value="MGI"/>
</dbReference>
<dbReference type="GO" id="GO:0008320">
    <property type="term" value="F:protein transmembrane transporter activity"/>
    <property type="evidence" value="ECO:0000250"/>
    <property type="project" value="UniProt"/>
</dbReference>
<dbReference type="GO" id="GO:1990757">
    <property type="term" value="F:ubiquitin ligase activator activity"/>
    <property type="evidence" value="ECO:0000314"/>
    <property type="project" value="UniProtKB"/>
</dbReference>
<dbReference type="GO" id="GO:0004842">
    <property type="term" value="F:ubiquitin-protein transferase activity"/>
    <property type="evidence" value="ECO:0000318"/>
    <property type="project" value="GO_Central"/>
</dbReference>
<dbReference type="GO" id="GO:0008270">
    <property type="term" value="F:zinc ion binding"/>
    <property type="evidence" value="ECO:0000315"/>
    <property type="project" value="UniProtKB"/>
</dbReference>
<dbReference type="GO" id="GO:0034614">
    <property type="term" value="P:cellular response to reactive oxygen species"/>
    <property type="evidence" value="ECO:0000314"/>
    <property type="project" value="UniProt"/>
</dbReference>
<dbReference type="GO" id="GO:0007031">
    <property type="term" value="P:peroxisome organization"/>
    <property type="evidence" value="ECO:0000314"/>
    <property type="project" value="UniProtKB"/>
</dbReference>
<dbReference type="GO" id="GO:0043161">
    <property type="term" value="P:proteasome-mediated ubiquitin-dependent protein catabolic process"/>
    <property type="evidence" value="ECO:0000250"/>
    <property type="project" value="UniProt"/>
</dbReference>
<dbReference type="GO" id="GO:0016558">
    <property type="term" value="P:protein import into peroxisome matrix"/>
    <property type="evidence" value="ECO:0000315"/>
    <property type="project" value="UniProtKB"/>
</dbReference>
<dbReference type="GO" id="GO:0016562">
    <property type="term" value="P:protein import into peroxisome matrix, receptor recycling"/>
    <property type="evidence" value="ECO:0000314"/>
    <property type="project" value="UniProtKB"/>
</dbReference>
<dbReference type="GO" id="GO:0044721">
    <property type="term" value="P:protein import into peroxisome matrix, substrate release"/>
    <property type="evidence" value="ECO:0000250"/>
    <property type="project" value="UniProt"/>
</dbReference>
<dbReference type="GO" id="GO:0006513">
    <property type="term" value="P:protein monoubiquitination"/>
    <property type="evidence" value="ECO:0000318"/>
    <property type="project" value="GO_Central"/>
</dbReference>
<dbReference type="GO" id="GO:0000209">
    <property type="term" value="P:protein polyubiquitination"/>
    <property type="evidence" value="ECO:0000314"/>
    <property type="project" value="UniProt"/>
</dbReference>
<dbReference type="GO" id="GO:0006515">
    <property type="term" value="P:protein quality control for misfolded or incompletely synthesized proteins"/>
    <property type="evidence" value="ECO:0000250"/>
    <property type="project" value="UniProt"/>
</dbReference>
<dbReference type="GO" id="GO:0006625">
    <property type="term" value="P:protein targeting to peroxisome"/>
    <property type="evidence" value="ECO:0000303"/>
    <property type="project" value="UniProtKB"/>
</dbReference>
<dbReference type="CDD" id="cd16451">
    <property type="entry name" value="mRING_PEX12"/>
    <property type="match status" value="1"/>
</dbReference>
<dbReference type="FunFam" id="3.30.40.10:FF:000266">
    <property type="entry name" value="Peroxisome assembly protein 12"/>
    <property type="match status" value="1"/>
</dbReference>
<dbReference type="Gene3D" id="3.30.40.10">
    <property type="entry name" value="Zinc/RING finger domain, C3HC4 (zinc finger)"/>
    <property type="match status" value="1"/>
</dbReference>
<dbReference type="InterPro" id="IPR017375">
    <property type="entry name" value="PEX12"/>
</dbReference>
<dbReference type="InterPro" id="IPR006845">
    <property type="entry name" value="Pex_N"/>
</dbReference>
<dbReference type="InterPro" id="IPR013083">
    <property type="entry name" value="Znf_RING/FYVE/PHD"/>
</dbReference>
<dbReference type="PANTHER" id="PTHR12888:SF2">
    <property type="entry name" value="PEROXISOME ASSEMBLY PROTEIN 12"/>
    <property type="match status" value="1"/>
</dbReference>
<dbReference type="PANTHER" id="PTHR12888">
    <property type="entry name" value="PEROXISOME ASSEMBLY PROTEIN 12 PEROXIN-12"/>
    <property type="match status" value="1"/>
</dbReference>
<dbReference type="Pfam" id="PF04757">
    <property type="entry name" value="Pex2_Pex12"/>
    <property type="match status" value="1"/>
</dbReference>
<dbReference type="PIRSF" id="PIRSF038074">
    <property type="entry name" value="Peroxisome_assembly_p12"/>
    <property type="match status" value="1"/>
</dbReference>
<dbReference type="SUPFAM" id="SSF57850">
    <property type="entry name" value="RING/U-box"/>
    <property type="match status" value="1"/>
</dbReference>
<gene>
    <name evidence="18 21" type="primary">PEX12</name>
    <name type="synonym">PAF3</name>
</gene>
<proteinExistence type="evidence at protein level"/>
<accession>O00623</accession>
<accession>B2R6M2</accession>
<protein>
    <recommendedName>
        <fullName evidence="19">Peroxisome assembly protein 12</fullName>
    </recommendedName>
    <alternativeName>
        <fullName evidence="19">Peroxin-12</fullName>
    </alternativeName>
    <alternativeName>
        <fullName>Peroxisome assembly factor 3</fullName>
        <shortName>PAF-3</shortName>
    </alternativeName>
</protein>
<evidence type="ECO:0000250" key="1">
    <source>
        <dbReference type="UniProtKB" id="G2Q5N0"/>
    </source>
</evidence>
<evidence type="ECO:0000250" key="2">
    <source>
        <dbReference type="UniProtKB" id="Q04370"/>
    </source>
</evidence>
<evidence type="ECO:0000255" key="3"/>
<evidence type="ECO:0000269" key="4">
    <source>
    </source>
</evidence>
<evidence type="ECO:0000269" key="5">
    <source>
    </source>
</evidence>
<evidence type="ECO:0000269" key="6">
    <source>
    </source>
</evidence>
<evidence type="ECO:0000269" key="7">
    <source>
    </source>
</evidence>
<evidence type="ECO:0000269" key="8">
    <source>
    </source>
</evidence>
<evidence type="ECO:0000269" key="9">
    <source>
    </source>
</evidence>
<evidence type="ECO:0000269" key="10">
    <source>
    </source>
</evidence>
<evidence type="ECO:0000269" key="11">
    <source>
    </source>
</evidence>
<evidence type="ECO:0000269" key="12">
    <source>
    </source>
</evidence>
<evidence type="ECO:0000269" key="13">
    <source>
    </source>
</evidence>
<evidence type="ECO:0000269" key="14">
    <source>
    </source>
</evidence>
<evidence type="ECO:0000269" key="15">
    <source>
    </source>
</evidence>
<evidence type="ECO:0000269" key="16">
    <source>
    </source>
</evidence>
<evidence type="ECO:0000269" key="17">
    <source>
    </source>
</evidence>
<evidence type="ECO:0000303" key="18">
    <source>
    </source>
</evidence>
<evidence type="ECO:0000305" key="19"/>
<evidence type="ECO:0000305" key="20">
    <source>
    </source>
</evidence>
<evidence type="ECO:0000312" key="21">
    <source>
        <dbReference type="HGNC" id="HGNC:8854"/>
    </source>
</evidence>